<dbReference type="EC" id="2.1.1.166" evidence="1"/>
<dbReference type="EMBL" id="CP000009">
    <property type="protein sequence ID" value="AAW61996.1"/>
    <property type="molecule type" value="Genomic_DNA"/>
</dbReference>
<dbReference type="RefSeq" id="WP_011253766.1">
    <property type="nucleotide sequence ID" value="NZ_LT900338.1"/>
</dbReference>
<dbReference type="SMR" id="Q5FNQ1"/>
<dbReference type="STRING" id="290633.GOX2262"/>
<dbReference type="KEGG" id="gox:GOX2262"/>
<dbReference type="eggNOG" id="COG0293">
    <property type="taxonomic scope" value="Bacteria"/>
</dbReference>
<dbReference type="HOGENOM" id="CLU_009422_4_2_5"/>
<dbReference type="Proteomes" id="UP000006375">
    <property type="component" value="Chromosome"/>
</dbReference>
<dbReference type="GO" id="GO:0005737">
    <property type="term" value="C:cytoplasm"/>
    <property type="evidence" value="ECO:0007669"/>
    <property type="project" value="UniProtKB-SubCell"/>
</dbReference>
<dbReference type="GO" id="GO:0008650">
    <property type="term" value="F:rRNA (uridine-2'-O-)-methyltransferase activity"/>
    <property type="evidence" value="ECO:0007669"/>
    <property type="project" value="UniProtKB-UniRule"/>
</dbReference>
<dbReference type="Gene3D" id="3.40.50.150">
    <property type="entry name" value="Vaccinia Virus protein VP39"/>
    <property type="match status" value="1"/>
</dbReference>
<dbReference type="HAMAP" id="MF_01547">
    <property type="entry name" value="RNA_methyltr_E"/>
    <property type="match status" value="1"/>
</dbReference>
<dbReference type="InterPro" id="IPR050082">
    <property type="entry name" value="RNA_methyltr_RlmE"/>
</dbReference>
<dbReference type="InterPro" id="IPR002877">
    <property type="entry name" value="RNA_MeTrfase_FtsJ_dom"/>
</dbReference>
<dbReference type="InterPro" id="IPR015507">
    <property type="entry name" value="rRNA-MeTfrase_E"/>
</dbReference>
<dbReference type="InterPro" id="IPR029063">
    <property type="entry name" value="SAM-dependent_MTases_sf"/>
</dbReference>
<dbReference type="PANTHER" id="PTHR10920">
    <property type="entry name" value="RIBOSOMAL RNA METHYLTRANSFERASE"/>
    <property type="match status" value="1"/>
</dbReference>
<dbReference type="PANTHER" id="PTHR10920:SF18">
    <property type="entry name" value="RRNA METHYLTRANSFERASE 2, MITOCHONDRIAL"/>
    <property type="match status" value="1"/>
</dbReference>
<dbReference type="Pfam" id="PF01728">
    <property type="entry name" value="FtsJ"/>
    <property type="match status" value="1"/>
</dbReference>
<dbReference type="SUPFAM" id="SSF53335">
    <property type="entry name" value="S-adenosyl-L-methionine-dependent methyltransferases"/>
    <property type="match status" value="1"/>
</dbReference>
<reference key="1">
    <citation type="journal article" date="2005" name="Nat. Biotechnol.">
        <title>Complete genome sequence of the acetic acid bacterium Gluconobacter oxydans.</title>
        <authorList>
            <person name="Prust C."/>
            <person name="Hoffmeister M."/>
            <person name="Liesegang H."/>
            <person name="Wiezer A."/>
            <person name="Fricke W.F."/>
            <person name="Ehrenreich A."/>
            <person name="Gottschalk G."/>
            <person name="Deppenmeier U."/>
        </authorList>
    </citation>
    <scope>NUCLEOTIDE SEQUENCE [LARGE SCALE GENOMIC DNA]</scope>
    <source>
        <strain>621H</strain>
    </source>
</reference>
<comment type="function">
    <text evidence="1">Specifically methylates the uridine in position 2552 of 23S rRNA at the 2'-O position of the ribose in the fully assembled 50S ribosomal subunit.</text>
</comment>
<comment type="catalytic activity">
    <reaction evidence="1">
        <text>uridine(2552) in 23S rRNA + S-adenosyl-L-methionine = 2'-O-methyluridine(2552) in 23S rRNA + S-adenosyl-L-homocysteine + H(+)</text>
        <dbReference type="Rhea" id="RHEA:42720"/>
        <dbReference type="Rhea" id="RHEA-COMP:10202"/>
        <dbReference type="Rhea" id="RHEA-COMP:10203"/>
        <dbReference type="ChEBI" id="CHEBI:15378"/>
        <dbReference type="ChEBI" id="CHEBI:57856"/>
        <dbReference type="ChEBI" id="CHEBI:59789"/>
        <dbReference type="ChEBI" id="CHEBI:65315"/>
        <dbReference type="ChEBI" id="CHEBI:74478"/>
        <dbReference type="EC" id="2.1.1.166"/>
    </reaction>
</comment>
<comment type="subcellular location">
    <subcellularLocation>
        <location evidence="1">Cytoplasm</location>
    </subcellularLocation>
</comment>
<comment type="similarity">
    <text evidence="1">Belongs to the class I-like SAM-binding methyltransferase superfamily. RNA methyltransferase RlmE family.</text>
</comment>
<evidence type="ECO:0000255" key="1">
    <source>
        <dbReference type="HAMAP-Rule" id="MF_01547"/>
    </source>
</evidence>
<evidence type="ECO:0000256" key="2">
    <source>
        <dbReference type="SAM" id="MobiDB-lite"/>
    </source>
</evidence>
<feature type="chain" id="PRO_0000155501" description="Ribosomal RNA large subunit methyltransferase E">
    <location>
        <begin position="1"/>
        <end position="268"/>
    </location>
</feature>
<feature type="region of interest" description="Disordered" evidence="2">
    <location>
        <begin position="1"/>
        <end position="60"/>
    </location>
</feature>
<feature type="compositionally biased region" description="Polar residues" evidence="2">
    <location>
        <begin position="26"/>
        <end position="52"/>
    </location>
</feature>
<feature type="active site" description="Proton acceptor" evidence="1">
    <location>
        <position position="213"/>
    </location>
</feature>
<feature type="binding site" evidence="1">
    <location>
        <position position="115"/>
    </location>
    <ligand>
        <name>S-adenosyl-L-methionine</name>
        <dbReference type="ChEBI" id="CHEBI:59789"/>
    </ligand>
</feature>
<feature type="binding site" evidence="1">
    <location>
        <position position="117"/>
    </location>
    <ligand>
        <name>S-adenosyl-L-methionine</name>
        <dbReference type="ChEBI" id="CHEBI:59789"/>
    </ligand>
</feature>
<feature type="binding site" evidence="1">
    <location>
        <position position="133"/>
    </location>
    <ligand>
        <name>S-adenosyl-L-methionine</name>
        <dbReference type="ChEBI" id="CHEBI:59789"/>
    </ligand>
</feature>
<feature type="binding site" evidence="1">
    <location>
        <position position="149"/>
    </location>
    <ligand>
        <name>S-adenosyl-L-methionine</name>
        <dbReference type="ChEBI" id="CHEBI:59789"/>
    </ligand>
</feature>
<feature type="binding site" evidence="1">
    <location>
        <position position="173"/>
    </location>
    <ligand>
        <name>S-adenosyl-L-methionine</name>
        <dbReference type="ChEBI" id="CHEBI:59789"/>
    </ligand>
</feature>
<organism>
    <name type="scientific">Gluconobacter oxydans (strain 621H)</name>
    <name type="common">Gluconobacter suboxydans</name>
    <dbReference type="NCBI Taxonomy" id="290633"/>
    <lineage>
        <taxon>Bacteria</taxon>
        <taxon>Pseudomonadati</taxon>
        <taxon>Pseudomonadota</taxon>
        <taxon>Alphaproteobacteria</taxon>
        <taxon>Acetobacterales</taxon>
        <taxon>Acetobacteraceae</taxon>
        <taxon>Gluconobacter</taxon>
    </lineage>
</organism>
<keyword id="KW-0963">Cytoplasm</keyword>
<keyword id="KW-0489">Methyltransferase</keyword>
<keyword id="KW-1185">Reference proteome</keyword>
<keyword id="KW-0698">rRNA processing</keyword>
<keyword id="KW-0949">S-adenosyl-L-methionine</keyword>
<keyword id="KW-0808">Transferase</keyword>
<protein>
    <recommendedName>
        <fullName evidence="1">Ribosomal RNA large subunit methyltransferase E</fullName>
        <ecNumber evidence="1">2.1.1.166</ecNumber>
    </recommendedName>
    <alternativeName>
        <fullName evidence="1">23S rRNA Um2552 methyltransferase</fullName>
    </alternativeName>
    <alternativeName>
        <fullName evidence="1">rRNA (uridine-2'-O-)-methyltransferase</fullName>
    </alternativeName>
</protein>
<accession>Q5FNQ1</accession>
<name>RLME_GLUOX</name>
<proteinExistence type="inferred from homology"/>
<gene>
    <name evidence="1" type="primary">rlmE</name>
    <name evidence="1" type="synonym">ftsJ</name>
    <name evidence="1" type="synonym">rrmJ</name>
    <name type="ordered locus">GOX2262</name>
</gene>
<sequence>MKPPRSRSGSSKDTGPKRIPGKALKSASNPGENDATLDSATARTARNKTVSLRTARGRTTAQQRWLNRQLNDPYVAAARKQGWRSRAAFKLIEIDDRFKLIGEGTRIIDLGAAPGGWTQVAVKRGAKHVVGLDLLPVDPVAGAEIIEGDFTDPEMPDRLKDMLGGPADLVMSDMAPNTTGHAATDHMRIMGLAEGALDFAFQVLAEGGSFIAKVFQGGSEKDMLALMKTAFSSVKHVKPPASRKESSELYVIATGFRPERLLESSKGA</sequence>